<reference key="1">
    <citation type="submission" date="1996-09" db="EMBL/GenBank/DDBJ databases">
        <title>Molecular genetic analysis of the Salmonella typhimurium LT2 phnXWRSTUV locus required for 2-aminoethylphosphonate transport and metabolism.</title>
        <authorList>
            <person name="Metcalf W.W."/>
            <person name="Jiang W."/>
            <person name="Wanner B.L."/>
        </authorList>
    </citation>
    <scope>NUCLEOTIDE SEQUENCE [GENOMIC DNA]</scope>
    <source>
        <strain>LT2</strain>
    </source>
</reference>
<reference key="2">
    <citation type="journal article" date="2001" name="Nature">
        <title>Complete genome sequence of Salmonella enterica serovar Typhimurium LT2.</title>
        <authorList>
            <person name="McClelland M."/>
            <person name="Sanderson K.E."/>
            <person name="Spieth J."/>
            <person name="Clifton S.W."/>
            <person name="Latreille P."/>
            <person name="Courtney L."/>
            <person name="Porwollik S."/>
            <person name="Ali J."/>
            <person name="Dante M."/>
            <person name="Du F."/>
            <person name="Hou S."/>
            <person name="Layman D."/>
            <person name="Leonard S."/>
            <person name="Nguyen C."/>
            <person name="Scott K."/>
            <person name="Holmes A."/>
            <person name="Grewal N."/>
            <person name="Mulvaney E."/>
            <person name="Ryan E."/>
            <person name="Sun H."/>
            <person name="Florea L."/>
            <person name="Miller W."/>
            <person name="Stoneking T."/>
            <person name="Nhan M."/>
            <person name="Waterston R."/>
            <person name="Wilson R.K."/>
        </authorList>
    </citation>
    <scope>NUCLEOTIDE SEQUENCE [LARGE SCALE GENOMIC DNA]</scope>
    <source>
        <strain>LT2 / SGSC1412 / ATCC 700720</strain>
    </source>
</reference>
<reference key="3">
    <citation type="journal article" date="1995" name="J. Bacteriol.">
        <title>Molecular cloning, mapping, and regulation of Pho regulon genes for phosphonate breakdown by the phosphonatase pathway of Salmonella typhimurium LT2.</title>
        <authorList>
            <person name="Jiang W."/>
            <person name="Metcalf W.W."/>
            <person name="Lee K.-S."/>
            <person name="Wanner B.L."/>
        </authorList>
    </citation>
    <scope>CLONING</scope>
    <scope>INDUCTION</scope>
    <source>
        <strain>LT2</strain>
    </source>
</reference>
<comment type="induction">
    <text evidence="2">Induced when inorganic phosphate is limiting; this is controlled by PhoB.</text>
</comment>
<comment type="miscellaneous">
    <text>Maps to a phosphate-starvation-inducible locus previously known as PsiC.</text>
</comment>
<feature type="chain" id="PRO_0000286734" description="Putative transcriptional regulator of 2-aminoethylphosphonate degradation operons">
    <location>
        <begin position="1"/>
        <end position="239"/>
    </location>
</feature>
<feature type="domain" description="HTH gntR-type" evidence="1">
    <location>
        <begin position="8"/>
        <end position="76"/>
    </location>
</feature>
<feature type="DNA-binding region" description="H-T-H motif" evidence="1">
    <location>
        <begin position="36"/>
        <end position="55"/>
    </location>
</feature>
<accession>Q7CR30</accession>
<accession>Q79BM3</accession>
<dbReference type="EMBL" id="U69493">
    <property type="protein sequence ID" value="AAB39643.1"/>
    <property type="molecule type" value="Genomic_DNA"/>
</dbReference>
<dbReference type="EMBL" id="AE006468">
    <property type="protein sequence ID" value="AAL19384.1"/>
    <property type="molecule type" value="Genomic_DNA"/>
</dbReference>
<dbReference type="RefSeq" id="NP_459425.1">
    <property type="nucleotide sequence ID" value="NC_003197.2"/>
</dbReference>
<dbReference type="RefSeq" id="WP_000836268.1">
    <property type="nucleotide sequence ID" value="NC_003197.2"/>
</dbReference>
<dbReference type="SMR" id="Q7CR30"/>
<dbReference type="STRING" id="99287.STM0430"/>
<dbReference type="PaxDb" id="99287-STM0430"/>
<dbReference type="DNASU" id="1251949"/>
<dbReference type="GeneID" id="1251949"/>
<dbReference type="KEGG" id="stm:STM0430"/>
<dbReference type="PATRIC" id="fig|99287.12.peg.459"/>
<dbReference type="HOGENOM" id="CLU_063236_2_2_6"/>
<dbReference type="OMA" id="RINRDQH"/>
<dbReference type="PhylomeDB" id="Q7CR30"/>
<dbReference type="BioCyc" id="SENT99287:STM0430-MONOMER"/>
<dbReference type="Proteomes" id="UP000001014">
    <property type="component" value="Chromosome"/>
</dbReference>
<dbReference type="GO" id="GO:0003677">
    <property type="term" value="F:DNA binding"/>
    <property type="evidence" value="ECO:0007669"/>
    <property type="project" value="UniProtKB-KW"/>
</dbReference>
<dbReference type="GO" id="GO:0003700">
    <property type="term" value="F:DNA-binding transcription factor activity"/>
    <property type="evidence" value="ECO:0007669"/>
    <property type="project" value="InterPro"/>
</dbReference>
<dbReference type="GO" id="GO:0045892">
    <property type="term" value="P:negative regulation of DNA-templated transcription"/>
    <property type="evidence" value="ECO:0000318"/>
    <property type="project" value="GO_Central"/>
</dbReference>
<dbReference type="CDD" id="cd07377">
    <property type="entry name" value="WHTH_GntR"/>
    <property type="match status" value="1"/>
</dbReference>
<dbReference type="FunFam" id="1.10.10.10:FF:000287">
    <property type="entry name" value="Phosphonate utilization transcriptional regulator PhnR"/>
    <property type="match status" value="1"/>
</dbReference>
<dbReference type="FunFam" id="3.40.1410.10:FF:000010">
    <property type="entry name" value="Phosphonate utilization transcriptional regulator PhnR"/>
    <property type="match status" value="1"/>
</dbReference>
<dbReference type="Gene3D" id="3.40.1410.10">
    <property type="entry name" value="Chorismate lyase-like"/>
    <property type="match status" value="1"/>
</dbReference>
<dbReference type="Gene3D" id="1.10.10.10">
    <property type="entry name" value="Winged helix-like DNA-binding domain superfamily/Winged helix DNA-binding domain"/>
    <property type="match status" value="1"/>
</dbReference>
<dbReference type="InterPro" id="IPR050679">
    <property type="entry name" value="Bact_HTH_transcr_reg"/>
</dbReference>
<dbReference type="InterPro" id="IPR028978">
    <property type="entry name" value="Chorismate_lyase_/UTRA_dom_sf"/>
</dbReference>
<dbReference type="InterPro" id="IPR000524">
    <property type="entry name" value="Tscrpt_reg_HTH_GntR"/>
</dbReference>
<dbReference type="InterPro" id="IPR017722">
    <property type="entry name" value="Tscrpt_reg_PhnR"/>
</dbReference>
<dbReference type="InterPro" id="IPR011663">
    <property type="entry name" value="UTRA"/>
</dbReference>
<dbReference type="InterPro" id="IPR036388">
    <property type="entry name" value="WH-like_DNA-bd_sf"/>
</dbReference>
<dbReference type="InterPro" id="IPR036390">
    <property type="entry name" value="WH_DNA-bd_sf"/>
</dbReference>
<dbReference type="NCBIfam" id="TIGR03337">
    <property type="entry name" value="phnR"/>
    <property type="match status" value="1"/>
</dbReference>
<dbReference type="PANTHER" id="PTHR44846">
    <property type="entry name" value="MANNOSYL-D-GLYCERATE TRANSPORT/METABOLISM SYSTEM REPRESSOR MNGR-RELATED"/>
    <property type="match status" value="1"/>
</dbReference>
<dbReference type="PANTHER" id="PTHR44846:SF7">
    <property type="entry name" value="TRANSCRIPTIONAL REGULATOR OF 2-AMINOETHYLPHOSPHONATE DEGRADATION OPERONS-RELATED"/>
    <property type="match status" value="1"/>
</dbReference>
<dbReference type="Pfam" id="PF00392">
    <property type="entry name" value="GntR"/>
    <property type="match status" value="1"/>
</dbReference>
<dbReference type="Pfam" id="PF07702">
    <property type="entry name" value="UTRA"/>
    <property type="match status" value="1"/>
</dbReference>
<dbReference type="PRINTS" id="PR00035">
    <property type="entry name" value="HTHGNTR"/>
</dbReference>
<dbReference type="SMART" id="SM00345">
    <property type="entry name" value="HTH_GNTR"/>
    <property type="match status" value="1"/>
</dbReference>
<dbReference type="SMART" id="SM00866">
    <property type="entry name" value="UTRA"/>
    <property type="match status" value="1"/>
</dbReference>
<dbReference type="SUPFAM" id="SSF64288">
    <property type="entry name" value="Chorismate lyase-like"/>
    <property type="match status" value="1"/>
</dbReference>
<dbReference type="SUPFAM" id="SSF46785">
    <property type="entry name" value="Winged helix' DNA-binding domain"/>
    <property type="match status" value="1"/>
</dbReference>
<dbReference type="PROSITE" id="PS50949">
    <property type="entry name" value="HTH_GNTR"/>
    <property type="match status" value="1"/>
</dbReference>
<keyword id="KW-0238">DNA-binding</keyword>
<keyword id="KW-1185">Reference proteome</keyword>
<keyword id="KW-0804">Transcription</keyword>
<keyword id="KW-0805">Transcription regulation</keyword>
<sequence length="239" mass="27482">MKSIPGDIPQYLLIKAQLQARIQSGALKSGDKLPSERELCAIFNTTRITIRESLAQLESSGLIWRADRRGWFVTPERLWLDPTQNTNFHKLCREQGREPKTALLSGVLTTVPVEVMEPLQLQPFDQIYLLTRLRYADGRAVCYCENHCLPARVPELLQYDLNGSLTEVYESHYNLVYTSMHLSFYPTAMPAQAAQALGVMEGRPALLLRRLNYDQHGRVLDLDIEYWRHDSLRIEVDTH</sequence>
<protein>
    <recommendedName>
        <fullName>Putative transcriptional regulator of 2-aminoethylphosphonate degradation operons</fullName>
    </recommendedName>
</protein>
<proteinExistence type="evidence at transcript level"/>
<name>PHNR_SALTY</name>
<gene>
    <name type="primary">phnR</name>
    <name type="ordered locus">STM0430</name>
</gene>
<evidence type="ECO:0000255" key="1">
    <source>
        <dbReference type="PROSITE-ProRule" id="PRU00307"/>
    </source>
</evidence>
<evidence type="ECO:0000269" key="2">
    <source>
    </source>
</evidence>
<organism>
    <name type="scientific">Salmonella typhimurium (strain LT2 / SGSC1412 / ATCC 700720)</name>
    <dbReference type="NCBI Taxonomy" id="99287"/>
    <lineage>
        <taxon>Bacteria</taxon>
        <taxon>Pseudomonadati</taxon>
        <taxon>Pseudomonadota</taxon>
        <taxon>Gammaproteobacteria</taxon>
        <taxon>Enterobacterales</taxon>
        <taxon>Enterobacteriaceae</taxon>
        <taxon>Salmonella</taxon>
    </lineage>
</organism>